<gene>
    <name evidence="7 9" type="primary">Tmx1</name>
    <name type="synonym">Txndc</name>
    <name type="synonym">Txndc1</name>
</gene>
<reference key="1">
    <citation type="journal article" date="2005" name="Science">
        <title>The transcriptional landscape of the mammalian genome.</title>
        <authorList>
            <person name="Carninci P."/>
            <person name="Kasukawa T."/>
            <person name="Katayama S."/>
            <person name="Gough J."/>
            <person name="Frith M.C."/>
            <person name="Maeda N."/>
            <person name="Oyama R."/>
            <person name="Ravasi T."/>
            <person name="Lenhard B."/>
            <person name="Wells C."/>
            <person name="Kodzius R."/>
            <person name="Shimokawa K."/>
            <person name="Bajic V.B."/>
            <person name="Brenner S.E."/>
            <person name="Batalov S."/>
            <person name="Forrest A.R."/>
            <person name="Zavolan M."/>
            <person name="Davis M.J."/>
            <person name="Wilming L.G."/>
            <person name="Aidinis V."/>
            <person name="Allen J.E."/>
            <person name="Ambesi-Impiombato A."/>
            <person name="Apweiler R."/>
            <person name="Aturaliya R.N."/>
            <person name="Bailey T.L."/>
            <person name="Bansal M."/>
            <person name="Baxter L."/>
            <person name="Beisel K.W."/>
            <person name="Bersano T."/>
            <person name="Bono H."/>
            <person name="Chalk A.M."/>
            <person name="Chiu K.P."/>
            <person name="Choudhary V."/>
            <person name="Christoffels A."/>
            <person name="Clutterbuck D.R."/>
            <person name="Crowe M.L."/>
            <person name="Dalla E."/>
            <person name="Dalrymple B.P."/>
            <person name="de Bono B."/>
            <person name="Della Gatta G."/>
            <person name="di Bernardo D."/>
            <person name="Down T."/>
            <person name="Engstrom P."/>
            <person name="Fagiolini M."/>
            <person name="Faulkner G."/>
            <person name="Fletcher C.F."/>
            <person name="Fukushima T."/>
            <person name="Furuno M."/>
            <person name="Futaki S."/>
            <person name="Gariboldi M."/>
            <person name="Georgii-Hemming P."/>
            <person name="Gingeras T.R."/>
            <person name="Gojobori T."/>
            <person name="Green R.E."/>
            <person name="Gustincich S."/>
            <person name="Harbers M."/>
            <person name="Hayashi Y."/>
            <person name="Hensch T.K."/>
            <person name="Hirokawa N."/>
            <person name="Hill D."/>
            <person name="Huminiecki L."/>
            <person name="Iacono M."/>
            <person name="Ikeo K."/>
            <person name="Iwama A."/>
            <person name="Ishikawa T."/>
            <person name="Jakt M."/>
            <person name="Kanapin A."/>
            <person name="Katoh M."/>
            <person name="Kawasawa Y."/>
            <person name="Kelso J."/>
            <person name="Kitamura H."/>
            <person name="Kitano H."/>
            <person name="Kollias G."/>
            <person name="Krishnan S.P."/>
            <person name="Kruger A."/>
            <person name="Kummerfeld S.K."/>
            <person name="Kurochkin I.V."/>
            <person name="Lareau L.F."/>
            <person name="Lazarevic D."/>
            <person name="Lipovich L."/>
            <person name="Liu J."/>
            <person name="Liuni S."/>
            <person name="McWilliam S."/>
            <person name="Madan Babu M."/>
            <person name="Madera M."/>
            <person name="Marchionni L."/>
            <person name="Matsuda H."/>
            <person name="Matsuzawa S."/>
            <person name="Miki H."/>
            <person name="Mignone F."/>
            <person name="Miyake S."/>
            <person name="Morris K."/>
            <person name="Mottagui-Tabar S."/>
            <person name="Mulder N."/>
            <person name="Nakano N."/>
            <person name="Nakauchi H."/>
            <person name="Ng P."/>
            <person name="Nilsson R."/>
            <person name="Nishiguchi S."/>
            <person name="Nishikawa S."/>
            <person name="Nori F."/>
            <person name="Ohara O."/>
            <person name="Okazaki Y."/>
            <person name="Orlando V."/>
            <person name="Pang K.C."/>
            <person name="Pavan W.J."/>
            <person name="Pavesi G."/>
            <person name="Pesole G."/>
            <person name="Petrovsky N."/>
            <person name="Piazza S."/>
            <person name="Reed J."/>
            <person name="Reid J.F."/>
            <person name="Ring B.Z."/>
            <person name="Ringwald M."/>
            <person name="Rost B."/>
            <person name="Ruan Y."/>
            <person name="Salzberg S.L."/>
            <person name="Sandelin A."/>
            <person name="Schneider C."/>
            <person name="Schoenbach C."/>
            <person name="Sekiguchi K."/>
            <person name="Semple C.A."/>
            <person name="Seno S."/>
            <person name="Sessa L."/>
            <person name="Sheng Y."/>
            <person name="Shibata Y."/>
            <person name="Shimada H."/>
            <person name="Shimada K."/>
            <person name="Silva D."/>
            <person name="Sinclair B."/>
            <person name="Sperling S."/>
            <person name="Stupka E."/>
            <person name="Sugiura K."/>
            <person name="Sultana R."/>
            <person name="Takenaka Y."/>
            <person name="Taki K."/>
            <person name="Tammoja K."/>
            <person name="Tan S.L."/>
            <person name="Tang S."/>
            <person name="Taylor M.S."/>
            <person name="Tegner J."/>
            <person name="Teichmann S.A."/>
            <person name="Ueda H.R."/>
            <person name="van Nimwegen E."/>
            <person name="Verardo R."/>
            <person name="Wei C.L."/>
            <person name="Yagi K."/>
            <person name="Yamanishi H."/>
            <person name="Zabarovsky E."/>
            <person name="Zhu S."/>
            <person name="Zimmer A."/>
            <person name="Hide W."/>
            <person name="Bult C."/>
            <person name="Grimmond S.M."/>
            <person name="Teasdale R.D."/>
            <person name="Liu E.T."/>
            <person name="Brusic V."/>
            <person name="Quackenbush J."/>
            <person name="Wahlestedt C."/>
            <person name="Mattick J.S."/>
            <person name="Hume D.A."/>
            <person name="Kai C."/>
            <person name="Sasaki D."/>
            <person name="Tomaru Y."/>
            <person name="Fukuda S."/>
            <person name="Kanamori-Katayama M."/>
            <person name="Suzuki M."/>
            <person name="Aoki J."/>
            <person name="Arakawa T."/>
            <person name="Iida J."/>
            <person name="Imamura K."/>
            <person name="Itoh M."/>
            <person name="Kato T."/>
            <person name="Kawaji H."/>
            <person name="Kawagashira N."/>
            <person name="Kawashima T."/>
            <person name="Kojima M."/>
            <person name="Kondo S."/>
            <person name="Konno H."/>
            <person name="Nakano K."/>
            <person name="Ninomiya N."/>
            <person name="Nishio T."/>
            <person name="Okada M."/>
            <person name="Plessy C."/>
            <person name="Shibata K."/>
            <person name="Shiraki T."/>
            <person name="Suzuki S."/>
            <person name="Tagami M."/>
            <person name="Waki K."/>
            <person name="Watahiki A."/>
            <person name="Okamura-Oho Y."/>
            <person name="Suzuki H."/>
            <person name="Kawai J."/>
            <person name="Hayashizaki Y."/>
        </authorList>
    </citation>
    <scope>NUCLEOTIDE SEQUENCE [LARGE SCALE MRNA]</scope>
    <source>
        <strain>C57BL/6J</strain>
        <strain>NOD</strain>
        <tissue>Bone marrow</tissue>
        <tissue>Embryo</tissue>
        <tissue>Pancreatic islet</tissue>
        <tissue>Pituitary</tissue>
    </source>
</reference>
<reference key="2">
    <citation type="journal article" date="2004" name="Genome Res.">
        <title>The status, quality, and expansion of the NIH full-length cDNA project: the Mammalian Gene Collection (MGC).</title>
        <authorList>
            <consortium name="The MGC Project Team"/>
        </authorList>
    </citation>
    <scope>NUCLEOTIDE SEQUENCE [LARGE SCALE MRNA]</scope>
    <source>
        <strain>C57BL/6J</strain>
        <strain>FVB/N</strain>
        <tissue>Mammary gland</tissue>
        <tissue>Retina</tissue>
    </source>
</reference>
<reference key="3">
    <citation type="journal article" date="2007" name="Mol. Cell. Proteomics">
        <title>Qualitative and quantitative analyses of protein phosphorylation in naive and stimulated mouse synaptosomal preparations.</title>
        <authorList>
            <person name="Munton R.P."/>
            <person name="Tweedie-Cullen R."/>
            <person name="Livingstone-Zatchej M."/>
            <person name="Weinandy F."/>
            <person name="Waidelich M."/>
            <person name="Longo D."/>
            <person name="Gehrig P."/>
            <person name="Potthast F."/>
            <person name="Rutishauser D."/>
            <person name="Gerrits B."/>
            <person name="Panse C."/>
            <person name="Schlapbach R."/>
            <person name="Mansuy I.M."/>
        </authorList>
    </citation>
    <scope>IDENTIFICATION BY MASS SPECTROMETRY [LARGE SCALE ANALYSIS]</scope>
    <source>
        <tissue>Brain cortex</tissue>
    </source>
</reference>
<reference key="4">
    <citation type="journal article" date="2007" name="Mol. Cell. Proteomics">
        <title>Mitochondrial phosphoproteome revealed by an improved IMAC method and MS/MS/MS.</title>
        <authorList>
            <person name="Lee J."/>
            <person name="Xu Y."/>
            <person name="Chen Y."/>
            <person name="Sprung R."/>
            <person name="Kim S.C."/>
            <person name="Xie S."/>
            <person name="Zhao Y."/>
        </authorList>
    </citation>
    <scope>PHOSPHORYLATION [LARGE SCALE ANALYSIS] AT SER-245</scope>
    <scope>IDENTIFICATION BY MASS SPECTROMETRY [LARGE SCALE ANALYSIS]</scope>
    <source>
        <tissue>Liver</tissue>
    </source>
</reference>
<reference key="5">
    <citation type="journal article" date="2007" name="Proc. Natl. Acad. Sci. U.S.A.">
        <title>Large-scale phosphorylation analysis of mouse liver.</title>
        <authorList>
            <person name="Villen J."/>
            <person name="Beausoleil S.A."/>
            <person name="Gerber S.A."/>
            <person name="Gygi S.P."/>
        </authorList>
    </citation>
    <scope>PHOSPHORYLATION [LARGE SCALE ANALYSIS] AT SER-245</scope>
    <scope>IDENTIFICATION BY MASS SPECTROMETRY [LARGE SCALE ANALYSIS]</scope>
    <source>
        <tissue>Liver</tissue>
    </source>
</reference>
<reference key="6">
    <citation type="journal article" date="2008" name="J. Proteome Res.">
        <title>Specific phosphopeptide enrichment with immobilized titanium ion affinity chromatography adsorbent for phosphoproteome analysis.</title>
        <authorList>
            <person name="Zhou H."/>
            <person name="Ye M."/>
            <person name="Dong J."/>
            <person name="Han G."/>
            <person name="Jiang X."/>
            <person name="Wu R."/>
            <person name="Zou H."/>
        </authorList>
    </citation>
    <scope>IDENTIFICATION BY MASS SPECTROMETRY [LARGE SCALE ANALYSIS]</scope>
    <source>
        <tissue>Liver</tissue>
    </source>
</reference>
<reference key="7">
    <citation type="journal article" date="2009" name="Immunity">
        <title>The phagosomal proteome in interferon-gamma-activated macrophages.</title>
        <authorList>
            <person name="Trost M."/>
            <person name="English L."/>
            <person name="Lemieux S."/>
            <person name="Courcelles M."/>
            <person name="Desjardins M."/>
            <person name="Thibault P."/>
        </authorList>
    </citation>
    <scope>PHOSPHORYLATION [LARGE SCALE ANALYSIS] AT SER-245</scope>
    <scope>IDENTIFICATION BY MASS SPECTROMETRY [LARGE SCALE ANALYSIS]</scope>
</reference>
<reference key="8">
    <citation type="journal article" date="2009" name="Mol. Cell. Proteomics">
        <title>Large scale localization of protein phosphorylation by use of electron capture dissociation mass spectrometry.</title>
        <authorList>
            <person name="Sweet S.M."/>
            <person name="Bailey C.M."/>
            <person name="Cunningham D.L."/>
            <person name="Heath J.K."/>
            <person name="Cooper H.J."/>
        </authorList>
    </citation>
    <scope>PHOSPHORYLATION [LARGE SCALE ANALYSIS] AT SER-245</scope>
    <scope>IDENTIFICATION BY MASS SPECTROMETRY [LARGE SCALE ANALYSIS]</scope>
    <source>
        <tissue>Embryonic fibroblast</tissue>
    </source>
</reference>
<reference key="9">
    <citation type="journal article" date="2010" name="Cell">
        <title>A tissue-specific atlas of mouse protein phosphorylation and expression.</title>
        <authorList>
            <person name="Huttlin E.L."/>
            <person name="Jedrychowski M.P."/>
            <person name="Elias J.E."/>
            <person name="Goswami T."/>
            <person name="Rad R."/>
            <person name="Beausoleil S.A."/>
            <person name="Villen J."/>
            <person name="Haas W."/>
            <person name="Sowa M.E."/>
            <person name="Gygi S.P."/>
        </authorList>
    </citation>
    <scope>PHOSPHORYLATION [LARGE SCALE ANALYSIS] AT SER-245</scope>
    <scope>IDENTIFICATION BY MASS SPECTROMETRY [LARGE SCALE ANALYSIS]</scope>
    <source>
        <tissue>Brain</tissue>
        <tissue>Brown adipose tissue</tissue>
        <tissue>Heart</tissue>
        <tissue>Kidney</tissue>
        <tissue>Liver</tissue>
        <tissue>Lung</tissue>
        <tissue>Pancreas</tissue>
        <tissue>Spleen</tissue>
        <tissue>Testis</tissue>
    </source>
</reference>
<reference key="10">
    <citation type="journal article" date="2015" name="Mol. Biol. Cell">
        <title>Division of labor among oxidoreductases: TMX1 preferentially acts on transmembrane polypeptides.</title>
        <authorList>
            <person name="Pisoni G.B."/>
            <person name="Ruddock L.W."/>
            <person name="Bulleid N."/>
            <person name="Molinari M."/>
        </authorList>
    </citation>
    <scope>FUNCTION</scope>
    <scope>CATALYTIC ACTIVITY</scope>
    <scope>MUTAGENESIS OF CYS-59</scope>
</reference>
<reference key="11">
    <citation type="journal article" date="2019" name="Blood">
        <title>The transmembrane protein disulfide isomerase TMX1 negatively regulates platelet responses.</title>
        <authorList>
            <person name="Zhao Z."/>
            <person name="Wu Y."/>
            <person name="Zhou J."/>
            <person name="Chen F."/>
            <person name="Yang A."/>
            <person name="Essex D.W."/>
        </authorList>
    </citation>
    <scope>FUNCTION</scope>
    <scope>DISRUPTION PHENOTYPE</scope>
</reference>
<accession>Q8VBT0</accession>
<accession>Q3UCI8</accession>
<accession>Q9CSD5</accession>
<organism>
    <name type="scientific">Mus musculus</name>
    <name type="common">Mouse</name>
    <dbReference type="NCBI Taxonomy" id="10090"/>
    <lineage>
        <taxon>Eukaryota</taxon>
        <taxon>Metazoa</taxon>
        <taxon>Chordata</taxon>
        <taxon>Craniata</taxon>
        <taxon>Vertebrata</taxon>
        <taxon>Euteleostomi</taxon>
        <taxon>Mammalia</taxon>
        <taxon>Eutheria</taxon>
        <taxon>Euarchontoglires</taxon>
        <taxon>Glires</taxon>
        <taxon>Rodentia</taxon>
        <taxon>Myomorpha</taxon>
        <taxon>Muroidea</taxon>
        <taxon>Muridae</taxon>
        <taxon>Murinae</taxon>
        <taxon>Mus</taxon>
        <taxon>Mus</taxon>
    </lineage>
</organism>
<name>TMX1_MOUSE</name>
<feature type="signal peptide" evidence="2">
    <location>
        <begin position="1"/>
        <end position="26"/>
    </location>
</feature>
<feature type="chain" id="PRO_0000034154" description="Thioredoxin-related transmembrane protein 1">
    <location>
        <begin position="27"/>
        <end position="278"/>
    </location>
</feature>
<feature type="topological domain" description="Extracellular" evidence="2">
    <location>
        <begin position="27"/>
        <end position="181"/>
    </location>
</feature>
<feature type="transmembrane region" description="Helical" evidence="2">
    <location>
        <begin position="182"/>
        <end position="202"/>
    </location>
</feature>
<feature type="topological domain" description="Cytoplasmic" evidence="2">
    <location>
        <begin position="203"/>
        <end position="278"/>
    </location>
</feature>
<feature type="domain" description="Thioredoxin" evidence="3">
    <location>
        <begin position="27"/>
        <end position="132"/>
    </location>
</feature>
<feature type="region of interest" description="Disordered" evidence="4">
    <location>
        <begin position="217"/>
        <end position="278"/>
    </location>
</feature>
<feature type="compositionally biased region" description="Polar residues" evidence="4">
    <location>
        <begin position="217"/>
        <end position="226"/>
    </location>
</feature>
<feature type="compositionally biased region" description="Acidic residues" evidence="4">
    <location>
        <begin position="235"/>
        <end position="251"/>
    </location>
</feature>
<feature type="active site" description="Nucleophile" evidence="1">
    <location>
        <position position="56"/>
    </location>
</feature>
<feature type="active site" description="Nucleophile" evidence="1">
    <location>
        <position position="59"/>
    </location>
</feature>
<feature type="modified residue" description="Phosphoserine" evidence="10 11 12 13 14">
    <location>
        <position position="245"/>
    </location>
</feature>
<feature type="modified residue" description="Phosphoserine" evidence="1">
    <location>
        <position position="278"/>
    </location>
</feature>
<feature type="lipid moiety-binding region" description="S-palmitoyl cysteine" evidence="1">
    <location>
        <position position="205"/>
    </location>
</feature>
<feature type="lipid moiety-binding region" description="S-palmitoyl cysteine" evidence="1">
    <location>
        <position position="207"/>
    </location>
</feature>
<feature type="disulfide bond" description="Redox-active" evidence="3">
    <location>
        <begin position="56"/>
        <end position="59"/>
    </location>
</feature>
<feature type="mutagenesis site" description="Abolished protein disulfide isomerase activity." evidence="5">
    <original>C</original>
    <variation>A</variation>
    <location>
        <position position="59"/>
    </location>
</feature>
<evidence type="ECO:0000250" key="1">
    <source>
        <dbReference type="UniProtKB" id="Q9H3N1"/>
    </source>
</evidence>
<evidence type="ECO:0000255" key="2"/>
<evidence type="ECO:0000255" key="3">
    <source>
        <dbReference type="PROSITE-ProRule" id="PRU00691"/>
    </source>
</evidence>
<evidence type="ECO:0000256" key="4">
    <source>
        <dbReference type="SAM" id="MobiDB-lite"/>
    </source>
</evidence>
<evidence type="ECO:0000269" key="5">
    <source>
    </source>
</evidence>
<evidence type="ECO:0000269" key="6">
    <source>
    </source>
</evidence>
<evidence type="ECO:0000303" key="7">
    <source>
    </source>
</evidence>
<evidence type="ECO:0000305" key="8"/>
<evidence type="ECO:0000312" key="9">
    <source>
        <dbReference type="MGI" id="MGI:1919986"/>
    </source>
</evidence>
<evidence type="ECO:0007744" key="10">
    <source>
    </source>
</evidence>
<evidence type="ECO:0007744" key="11">
    <source>
    </source>
</evidence>
<evidence type="ECO:0007744" key="12">
    <source>
    </source>
</evidence>
<evidence type="ECO:0007744" key="13">
    <source>
    </source>
</evidence>
<evidence type="ECO:0007744" key="14">
    <source>
    </source>
</evidence>
<keyword id="KW-1015">Disulfide bond</keyword>
<keyword id="KW-0249">Electron transport</keyword>
<keyword id="KW-0256">Endoplasmic reticulum</keyword>
<keyword id="KW-0413">Isomerase</keyword>
<keyword id="KW-0449">Lipoprotein</keyword>
<keyword id="KW-0472">Membrane</keyword>
<keyword id="KW-0496">Mitochondrion</keyword>
<keyword id="KW-0564">Palmitate</keyword>
<keyword id="KW-0597">Phosphoprotein</keyword>
<keyword id="KW-0676">Redox-active center</keyword>
<keyword id="KW-1185">Reference proteome</keyword>
<keyword id="KW-0964">Secreted</keyword>
<keyword id="KW-0732">Signal</keyword>
<keyword id="KW-0812">Transmembrane</keyword>
<keyword id="KW-1133">Transmembrane helix</keyword>
<keyword id="KW-0813">Transport</keyword>
<comment type="function">
    <text evidence="1 5 6">Thiredoxin domain-containing protein that participates in various redox reactions through the reversible oxidation of its active center dithiol to a disulfide and catalyze dithiol-disulfide exchange reactions (PubMed:26246604). Acts as a key inhibitor of the alternative triglyceride biosynthesis pathway by inhibiting the activity of TMEM68/DIESL at the endoplasmic reticulum, thereby restricting accumulation of triacylglycerol (By similarity). The alternative triglyceride biosynthesis pathway mediates formation of triacylglycerol from diacylglycerol and membrane phospholipids (By similarity). Acts as a protein disulfide isomerase by catalyzing formation or reduction of disulfide bonds (PubMed:26246604). Specifically mediates formation of disulfide bonds of transmembrane proteins at the endoplasmic reticulum membrane (PubMed:26246604). Involved in ER-associated degradation (ERAD) via its protein disulfide isomerase activity by acting on folding-defective polypeptides at the endoplasmic reticulum membrane (By similarity). Acts as a negative regulator of platelet aggregation following secretion in the extracellular space (PubMed:30425049). Acts as a regulator of endoplasmic reticulum-mitochondria contact sites via its ability to regulate redox signals (By similarity). Regulates endoplasmic reticulum-mitochondria Ca(2+) flux (By similarity).</text>
</comment>
<comment type="catalytic activity">
    <reaction evidence="5">
        <text>Catalyzes the rearrangement of -S-S- bonds in proteins.</text>
        <dbReference type="EC" id="5.3.4.1"/>
    </reaction>
</comment>
<comment type="subunit">
    <text evidence="1">Interacts with ATP2A2.</text>
</comment>
<comment type="subcellular location">
    <subcellularLocation>
        <location evidence="1">Endoplasmic reticulum membrane</location>
        <topology evidence="2">Single-pass type I membrane protein</topology>
    </subcellularLocation>
    <subcellularLocation>
        <location evidence="1">Mitochondrion membrane</location>
        <topology evidence="2">Single-pass type I membrane protein</topology>
    </subcellularLocation>
    <subcellularLocation>
        <location evidence="1">Secreted</location>
    </subcellularLocation>
    <text evidence="1">Predominantly found in the endoplasmic reticulum. Secreted in the extracellular space following thrombin stimulation. Localizes to mitochondria-associated endoplasmic reticulum membrane (MAM); palmitoylation is required for MAM localization.</text>
</comment>
<comment type="PTM">
    <text evidence="1">Palmitoylated; palmitoylation is required for localization to mitochondria-associated endoplasmic reticulum membrane (MAM).</text>
</comment>
<comment type="disruption phenotype">
    <text evidence="6">Deficiency potentiates platelet function: mice display increased incorporation of platelets into a growing thrombus in an injury model, as well as shortened tail-bleeding times.</text>
</comment>
<dbReference type="EC" id="5.3.4.1" evidence="5"/>
<dbReference type="EMBL" id="AK013150">
    <property type="protein sequence ID" value="BAB28680.3"/>
    <property type="molecule type" value="mRNA"/>
</dbReference>
<dbReference type="EMBL" id="AK030429">
    <property type="protein sequence ID" value="BAC26960.1"/>
    <property type="molecule type" value="mRNA"/>
</dbReference>
<dbReference type="EMBL" id="AK050567">
    <property type="protein sequence ID" value="BAC34326.1"/>
    <property type="molecule type" value="mRNA"/>
</dbReference>
<dbReference type="EMBL" id="AK137059">
    <property type="protein sequence ID" value="BAE23223.1"/>
    <property type="molecule type" value="mRNA"/>
</dbReference>
<dbReference type="EMBL" id="AK150511">
    <property type="protein sequence ID" value="BAE29624.1"/>
    <property type="molecule type" value="mRNA"/>
</dbReference>
<dbReference type="EMBL" id="AK153027">
    <property type="protein sequence ID" value="BAE31660.1"/>
    <property type="molecule type" value="mRNA"/>
</dbReference>
<dbReference type="EMBL" id="AK170468">
    <property type="protein sequence ID" value="BAE41816.1"/>
    <property type="molecule type" value="mRNA"/>
</dbReference>
<dbReference type="EMBL" id="BC017603">
    <property type="protein sequence ID" value="AAH17603.1"/>
    <property type="molecule type" value="mRNA"/>
</dbReference>
<dbReference type="EMBL" id="BC021533">
    <property type="protein sequence ID" value="AAH21533.1"/>
    <property type="molecule type" value="mRNA"/>
</dbReference>
<dbReference type="CCDS" id="CCDS25958.1"/>
<dbReference type="RefSeq" id="NP_082615.1">
    <property type="nucleotide sequence ID" value="NM_028339.1"/>
</dbReference>
<dbReference type="SMR" id="Q8VBT0"/>
<dbReference type="BioGRID" id="215541">
    <property type="interactions" value="7"/>
</dbReference>
<dbReference type="FunCoup" id="Q8VBT0">
    <property type="interactions" value="2552"/>
</dbReference>
<dbReference type="IntAct" id="Q8VBT0">
    <property type="interactions" value="4"/>
</dbReference>
<dbReference type="MINT" id="Q8VBT0"/>
<dbReference type="STRING" id="10090.ENSMUSP00000021471"/>
<dbReference type="GlyGen" id="Q8VBT0">
    <property type="glycosylation" value="1 site, 1 O-linked glycan (1 site)"/>
</dbReference>
<dbReference type="iPTMnet" id="Q8VBT0"/>
<dbReference type="PhosphoSitePlus" id="Q8VBT0"/>
<dbReference type="SwissPalm" id="Q8VBT0"/>
<dbReference type="jPOST" id="Q8VBT0"/>
<dbReference type="PaxDb" id="10090-ENSMUSP00000021471"/>
<dbReference type="PeptideAtlas" id="Q8VBT0"/>
<dbReference type="ProteomicsDB" id="259443"/>
<dbReference type="Pumba" id="Q8VBT0"/>
<dbReference type="Antibodypedia" id="163">
    <property type="antibodies" value="303 antibodies from 32 providers"/>
</dbReference>
<dbReference type="DNASU" id="72736"/>
<dbReference type="Ensembl" id="ENSMUST00000021471.13">
    <property type="protein sequence ID" value="ENSMUSP00000021471.7"/>
    <property type="gene ID" value="ENSMUSG00000021072.13"/>
</dbReference>
<dbReference type="GeneID" id="72736"/>
<dbReference type="KEGG" id="mmu:72736"/>
<dbReference type="UCSC" id="uc007ntu.1">
    <property type="organism name" value="mouse"/>
</dbReference>
<dbReference type="AGR" id="MGI:1919986"/>
<dbReference type="CTD" id="81542"/>
<dbReference type="MGI" id="MGI:1919986">
    <property type="gene designation" value="Tmx1"/>
</dbReference>
<dbReference type="VEuPathDB" id="HostDB:ENSMUSG00000021072"/>
<dbReference type="eggNOG" id="KOG0913">
    <property type="taxonomic scope" value="Eukaryota"/>
</dbReference>
<dbReference type="GeneTree" id="ENSGT00940000155959"/>
<dbReference type="HOGENOM" id="CLU_069292_2_1_1"/>
<dbReference type="InParanoid" id="Q8VBT0"/>
<dbReference type="OMA" id="FRQYKGS"/>
<dbReference type="OrthoDB" id="7869097at2759"/>
<dbReference type="PhylomeDB" id="Q8VBT0"/>
<dbReference type="TreeFam" id="TF106376"/>
<dbReference type="BioGRID-ORCS" id="72736">
    <property type="hits" value="3 hits in 79 CRISPR screens"/>
</dbReference>
<dbReference type="ChiTaRS" id="Tmx1">
    <property type="organism name" value="mouse"/>
</dbReference>
<dbReference type="PRO" id="PR:Q8VBT0"/>
<dbReference type="Proteomes" id="UP000000589">
    <property type="component" value="Chromosome 12"/>
</dbReference>
<dbReference type="RNAct" id="Q8VBT0">
    <property type="molecule type" value="protein"/>
</dbReference>
<dbReference type="Bgee" id="ENSMUSG00000021072">
    <property type="expression patterns" value="Expressed in pigmented layer of retina and 260 other cell types or tissues"/>
</dbReference>
<dbReference type="ExpressionAtlas" id="Q8VBT0">
    <property type="expression patterns" value="baseline and differential"/>
</dbReference>
<dbReference type="GO" id="GO:0005789">
    <property type="term" value="C:endoplasmic reticulum membrane"/>
    <property type="evidence" value="ECO:0000250"/>
    <property type="project" value="UniProtKB"/>
</dbReference>
<dbReference type="GO" id="GO:0005576">
    <property type="term" value="C:extracellular region"/>
    <property type="evidence" value="ECO:0007669"/>
    <property type="project" value="UniProtKB-SubCell"/>
</dbReference>
<dbReference type="GO" id="GO:0044233">
    <property type="term" value="C:mitochondria-associated endoplasmic reticulum membrane contact site"/>
    <property type="evidence" value="ECO:0000250"/>
    <property type="project" value="UniProtKB"/>
</dbReference>
<dbReference type="GO" id="GO:0031966">
    <property type="term" value="C:mitochondrial membrane"/>
    <property type="evidence" value="ECO:0007669"/>
    <property type="project" value="UniProtKB-SubCell"/>
</dbReference>
<dbReference type="GO" id="GO:0004857">
    <property type="term" value="F:enzyme inhibitor activity"/>
    <property type="evidence" value="ECO:0000250"/>
    <property type="project" value="UniProtKB"/>
</dbReference>
<dbReference type="GO" id="GO:0003756">
    <property type="term" value="F:protein disulfide isomerase activity"/>
    <property type="evidence" value="ECO:0000314"/>
    <property type="project" value="UniProtKB"/>
</dbReference>
<dbReference type="GO" id="GO:0015035">
    <property type="term" value="F:protein-disulfide reductase activity"/>
    <property type="evidence" value="ECO:0000250"/>
    <property type="project" value="UniProtKB"/>
</dbReference>
<dbReference type="GO" id="GO:0090331">
    <property type="term" value="P:negative regulation of platelet aggregation"/>
    <property type="evidence" value="ECO:0000315"/>
    <property type="project" value="UniProtKB"/>
</dbReference>
<dbReference type="GO" id="GO:0010868">
    <property type="term" value="P:negative regulation of triglyceride biosynthetic process"/>
    <property type="evidence" value="ECO:0000250"/>
    <property type="project" value="UniProtKB"/>
</dbReference>
<dbReference type="GO" id="GO:1904294">
    <property type="term" value="P:positive regulation of ERAD pathway"/>
    <property type="evidence" value="ECO:0000250"/>
    <property type="project" value="UniProtKB"/>
</dbReference>
<dbReference type="GO" id="GO:0051924">
    <property type="term" value="P:regulation of calcium ion transport"/>
    <property type="evidence" value="ECO:0007669"/>
    <property type="project" value="Ensembl"/>
</dbReference>
<dbReference type="GO" id="GO:0034976">
    <property type="term" value="P:response to endoplasmic reticulum stress"/>
    <property type="evidence" value="ECO:0007669"/>
    <property type="project" value="Ensembl"/>
</dbReference>
<dbReference type="CDD" id="cd02994">
    <property type="entry name" value="PDI_a_TMX"/>
    <property type="match status" value="1"/>
</dbReference>
<dbReference type="FunFam" id="3.40.30.10:FF:000117">
    <property type="entry name" value="thioredoxin-related transmembrane protein 1"/>
    <property type="match status" value="1"/>
</dbReference>
<dbReference type="Gene3D" id="3.40.30.10">
    <property type="entry name" value="Glutaredoxin"/>
    <property type="match status" value="1"/>
</dbReference>
<dbReference type="InterPro" id="IPR036249">
    <property type="entry name" value="Thioredoxin-like_sf"/>
</dbReference>
<dbReference type="InterPro" id="IPR017937">
    <property type="entry name" value="Thioredoxin_CS"/>
</dbReference>
<dbReference type="InterPro" id="IPR013766">
    <property type="entry name" value="Thioredoxin_domain"/>
</dbReference>
<dbReference type="InterPro" id="IPR052454">
    <property type="entry name" value="TMX_domain-containing"/>
</dbReference>
<dbReference type="PANTHER" id="PTHR46107">
    <property type="entry name" value="DUMPY: SHORTER THAN WILD-TYPE"/>
    <property type="match status" value="1"/>
</dbReference>
<dbReference type="PANTHER" id="PTHR46107:SF2">
    <property type="entry name" value="THIOREDOXIN-RELATED TRANSMEMBRANE PROTEIN 1"/>
    <property type="match status" value="1"/>
</dbReference>
<dbReference type="Pfam" id="PF00085">
    <property type="entry name" value="Thioredoxin"/>
    <property type="match status" value="1"/>
</dbReference>
<dbReference type="SUPFAM" id="SSF52833">
    <property type="entry name" value="Thioredoxin-like"/>
    <property type="match status" value="1"/>
</dbReference>
<dbReference type="PROSITE" id="PS00194">
    <property type="entry name" value="THIOREDOXIN_1"/>
    <property type="match status" value="1"/>
</dbReference>
<dbReference type="PROSITE" id="PS51352">
    <property type="entry name" value="THIOREDOXIN_2"/>
    <property type="match status" value="1"/>
</dbReference>
<sequence>MAHLGRLMVPLAALVLLLWAVPGAHGRRNNVRVLTDENWTSLLEGEWMIEFYAPWCPACQNLQPEWESFAEWGEDLEVKVAKVDVTEQTGLSGRFIITALPSIYHCKDGEFRRYVGPRTKKDFINFVSDKEWKNIEPISSWFGPSSVLMTMMSALFQLSVYIRTSHSYFVHDLGIPAWGSYLVFAFATVLSGLLLGLCMIFVADCLCPSKRRKPQQQYAKKTSPEFSQPLKKVEEEQEADEEDVSEEEAEDREGASKATSQSSIRQRCVGLPSATDTS</sequence>
<proteinExistence type="evidence at protein level"/>
<protein>
    <recommendedName>
        <fullName>Thioredoxin-related transmembrane protein 1</fullName>
    </recommendedName>
    <alternativeName>
        <fullName evidence="8">Protein disulfide-isomerase TMX1</fullName>
        <ecNumber evidence="5">5.3.4.1</ecNumber>
    </alternativeName>
    <alternativeName>
        <fullName>Thioredoxin domain-containing protein 1</fullName>
    </alternativeName>
</protein>